<accession>Q971B3</accession>
<accession>F9VND3</accession>
<organism>
    <name type="scientific">Sulfurisphaera tokodaii (strain DSM 16993 / JCM 10545 / NBRC 100140 / 7)</name>
    <name type="common">Sulfolobus tokodaii</name>
    <dbReference type="NCBI Taxonomy" id="273063"/>
    <lineage>
        <taxon>Archaea</taxon>
        <taxon>Thermoproteota</taxon>
        <taxon>Thermoprotei</taxon>
        <taxon>Sulfolobales</taxon>
        <taxon>Sulfolobaceae</taxon>
        <taxon>Sulfurisphaera</taxon>
    </lineage>
</organism>
<proteinExistence type="inferred from homology"/>
<name>PDXS_SULTO</name>
<protein>
    <recommendedName>
        <fullName evidence="1">Pyridoxal 5'-phosphate synthase subunit PdxS</fullName>
        <shortName evidence="1">PLP synthase subunit PdxS</shortName>
        <ecNumber evidence="1">4.3.3.6</ecNumber>
    </recommendedName>
    <alternativeName>
        <fullName evidence="1">Pdx1</fullName>
    </alternativeName>
</protein>
<feature type="chain" id="PRO_0000109449" description="Pyridoxal 5'-phosphate synthase subunit PdxS">
    <location>
        <begin position="1"/>
        <end position="316"/>
    </location>
</feature>
<feature type="active site" description="Schiff-base intermediate with D-ribose 5-phosphate" evidence="1">
    <location>
        <position position="101"/>
    </location>
</feature>
<feature type="binding site" evidence="1">
    <location>
        <position position="44"/>
    </location>
    <ligand>
        <name>D-ribose 5-phosphate</name>
        <dbReference type="ChEBI" id="CHEBI:78346"/>
    </ligand>
</feature>
<feature type="binding site" evidence="1">
    <location>
        <position position="173"/>
    </location>
    <ligand>
        <name>D-ribose 5-phosphate</name>
        <dbReference type="ChEBI" id="CHEBI:78346"/>
    </ligand>
</feature>
<feature type="binding site" evidence="1">
    <location>
        <position position="185"/>
    </location>
    <ligand>
        <name>D-glyceraldehyde 3-phosphate</name>
        <dbReference type="ChEBI" id="CHEBI:59776"/>
    </ligand>
</feature>
<feature type="binding site" evidence="1">
    <location>
        <position position="234"/>
    </location>
    <ligand>
        <name>D-ribose 5-phosphate</name>
        <dbReference type="ChEBI" id="CHEBI:78346"/>
    </ligand>
</feature>
<feature type="binding site" evidence="1">
    <location>
        <begin position="255"/>
        <end position="256"/>
    </location>
    <ligand>
        <name>D-ribose 5-phosphate</name>
        <dbReference type="ChEBI" id="CHEBI:78346"/>
    </ligand>
</feature>
<sequence>MRDIIKDQGLLSFLPQKLDAELVQGSTMVKHAFPIFQKGGVVMDVTNVTQAEIAEDAGATAVMVLDKLPYDVRKSGGVARMADPKIIEEVMNSITIPVMAKVRIGHYYEAKILEALGVDMIDESEVLTPADEEHHINKWEFKVPFVNGARNLGEALRRITEGASMIRTKGEAGTGNVSEAVKHMKIINGEIRSLISMSEEDRMKKAREYQVPYQIVELTVKLGRLPVVNFAAGGIATPADAALMMWLGADGIFVGSGIFKSQDPDVRAKAIVLATANWEDPEIVLEAQKMISESKSMMGIDIKALKPEELLQVRGQ</sequence>
<dbReference type="EC" id="4.3.3.6" evidence="1"/>
<dbReference type="EMBL" id="BA000023">
    <property type="protein sequence ID" value="BAK54579.1"/>
    <property type="molecule type" value="Genomic_DNA"/>
</dbReference>
<dbReference type="SMR" id="Q971B3"/>
<dbReference type="STRING" id="273063.STK_14410"/>
<dbReference type="KEGG" id="sto:STK_14410"/>
<dbReference type="PATRIC" id="fig|273063.9.peg.1643"/>
<dbReference type="eggNOG" id="arCOG04075">
    <property type="taxonomic scope" value="Archaea"/>
</dbReference>
<dbReference type="UniPathway" id="UPA00245"/>
<dbReference type="Proteomes" id="UP000001015">
    <property type="component" value="Chromosome"/>
</dbReference>
<dbReference type="GO" id="GO:0036381">
    <property type="term" value="F:pyridoxal 5'-phosphate synthase (glutamine hydrolysing) activity"/>
    <property type="evidence" value="ECO:0007669"/>
    <property type="project" value="UniProtKB-UniRule"/>
</dbReference>
<dbReference type="GO" id="GO:0006520">
    <property type="term" value="P:amino acid metabolic process"/>
    <property type="evidence" value="ECO:0007669"/>
    <property type="project" value="TreeGrafter"/>
</dbReference>
<dbReference type="GO" id="GO:0042823">
    <property type="term" value="P:pyridoxal phosphate biosynthetic process"/>
    <property type="evidence" value="ECO:0007669"/>
    <property type="project" value="UniProtKB-UniRule"/>
</dbReference>
<dbReference type="GO" id="GO:0008615">
    <property type="term" value="P:pyridoxine biosynthetic process"/>
    <property type="evidence" value="ECO:0007669"/>
    <property type="project" value="TreeGrafter"/>
</dbReference>
<dbReference type="CDD" id="cd04727">
    <property type="entry name" value="pdxS"/>
    <property type="match status" value="1"/>
</dbReference>
<dbReference type="FunFam" id="3.20.20.70:FF:000001">
    <property type="entry name" value="Pyridoxine biosynthesis protein PDX1"/>
    <property type="match status" value="1"/>
</dbReference>
<dbReference type="Gene3D" id="3.20.20.70">
    <property type="entry name" value="Aldolase class I"/>
    <property type="match status" value="1"/>
</dbReference>
<dbReference type="HAMAP" id="MF_01824">
    <property type="entry name" value="PdxS"/>
    <property type="match status" value="1"/>
</dbReference>
<dbReference type="InterPro" id="IPR013785">
    <property type="entry name" value="Aldolase_TIM"/>
</dbReference>
<dbReference type="InterPro" id="IPR001852">
    <property type="entry name" value="PdxS/SNZ"/>
</dbReference>
<dbReference type="InterPro" id="IPR033755">
    <property type="entry name" value="PdxS/SNZ_N"/>
</dbReference>
<dbReference type="InterPro" id="IPR011060">
    <property type="entry name" value="RibuloseP-bd_barrel"/>
</dbReference>
<dbReference type="NCBIfam" id="NF003215">
    <property type="entry name" value="PRK04180.1"/>
    <property type="match status" value="1"/>
</dbReference>
<dbReference type="PANTHER" id="PTHR31829">
    <property type="entry name" value="PYRIDOXAL 5'-PHOSPHATE SYNTHASE SUBUNIT SNZ1-RELATED"/>
    <property type="match status" value="1"/>
</dbReference>
<dbReference type="PANTHER" id="PTHR31829:SF0">
    <property type="entry name" value="PYRIDOXAL 5'-PHOSPHATE SYNTHASE SUBUNIT SNZ1-RELATED"/>
    <property type="match status" value="1"/>
</dbReference>
<dbReference type="Pfam" id="PF01680">
    <property type="entry name" value="SOR_SNZ"/>
    <property type="match status" value="1"/>
</dbReference>
<dbReference type="PIRSF" id="PIRSF029271">
    <property type="entry name" value="Pdx1"/>
    <property type="match status" value="1"/>
</dbReference>
<dbReference type="SUPFAM" id="SSF51366">
    <property type="entry name" value="Ribulose-phoshate binding barrel"/>
    <property type="match status" value="1"/>
</dbReference>
<dbReference type="PROSITE" id="PS01235">
    <property type="entry name" value="PDXS_SNZ_1"/>
    <property type="match status" value="1"/>
</dbReference>
<dbReference type="PROSITE" id="PS51129">
    <property type="entry name" value="PDXS_SNZ_2"/>
    <property type="match status" value="1"/>
</dbReference>
<comment type="function">
    <text evidence="1">Catalyzes the formation of pyridoxal 5'-phosphate from ribose 5-phosphate (RBP), glyceraldehyde 3-phosphate (G3P) and ammonia. The ammonia is provided by the PdxT subunit. Can also use ribulose 5-phosphate and dihydroxyacetone phosphate as substrates, resulting from enzyme-catalyzed isomerization of RBP and G3P, respectively.</text>
</comment>
<comment type="catalytic activity">
    <reaction evidence="1">
        <text>aldehydo-D-ribose 5-phosphate + D-glyceraldehyde 3-phosphate + L-glutamine = pyridoxal 5'-phosphate + L-glutamate + phosphate + 3 H2O + H(+)</text>
        <dbReference type="Rhea" id="RHEA:31507"/>
        <dbReference type="ChEBI" id="CHEBI:15377"/>
        <dbReference type="ChEBI" id="CHEBI:15378"/>
        <dbReference type="ChEBI" id="CHEBI:29985"/>
        <dbReference type="ChEBI" id="CHEBI:43474"/>
        <dbReference type="ChEBI" id="CHEBI:58273"/>
        <dbReference type="ChEBI" id="CHEBI:58359"/>
        <dbReference type="ChEBI" id="CHEBI:59776"/>
        <dbReference type="ChEBI" id="CHEBI:597326"/>
        <dbReference type="EC" id="4.3.3.6"/>
    </reaction>
</comment>
<comment type="pathway">
    <text evidence="1">Cofactor biosynthesis; pyridoxal 5'-phosphate biosynthesis.</text>
</comment>
<comment type="subunit">
    <text evidence="1">In the presence of PdxT, forms a dodecamer of heterodimers.</text>
</comment>
<comment type="similarity">
    <text evidence="1">Belongs to the PdxS/SNZ family.</text>
</comment>
<evidence type="ECO:0000255" key="1">
    <source>
        <dbReference type="HAMAP-Rule" id="MF_01824"/>
    </source>
</evidence>
<keyword id="KW-0456">Lyase</keyword>
<keyword id="KW-0663">Pyridoxal phosphate</keyword>
<keyword id="KW-1185">Reference proteome</keyword>
<keyword id="KW-0704">Schiff base</keyword>
<reference key="1">
    <citation type="journal article" date="2001" name="DNA Res.">
        <title>Complete genome sequence of an aerobic thermoacidophilic Crenarchaeon, Sulfolobus tokodaii strain7.</title>
        <authorList>
            <person name="Kawarabayasi Y."/>
            <person name="Hino Y."/>
            <person name="Horikawa H."/>
            <person name="Jin-no K."/>
            <person name="Takahashi M."/>
            <person name="Sekine M."/>
            <person name="Baba S."/>
            <person name="Ankai A."/>
            <person name="Kosugi H."/>
            <person name="Hosoyama A."/>
            <person name="Fukui S."/>
            <person name="Nagai Y."/>
            <person name="Nishijima K."/>
            <person name="Otsuka R."/>
            <person name="Nakazawa H."/>
            <person name="Takamiya M."/>
            <person name="Kato Y."/>
            <person name="Yoshizawa T."/>
            <person name="Tanaka T."/>
            <person name="Kudoh Y."/>
            <person name="Yamazaki J."/>
            <person name="Kushida N."/>
            <person name="Oguchi A."/>
            <person name="Aoki K."/>
            <person name="Masuda S."/>
            <person name="Yanagii M."/>
            <person name="Nishimura M."/>
            <person name="Yamagishi A."/>
            <person name="Oshima T."/>
            <person name="Kikuchi H."/>
        </authorList>
    </citation>
    <scope>NUCLEOTIDE SEQUENCE [LARGE SCALE GENOMIC DNA]</scope>
    <source>
        <strain>DSM 16993 / JCM 10545 / NBRC 100140 / 7</strain>
    </source>
</reference>
<gene>
    <name evidence="1" type="primary">pdxS</name>
    <name type="ordered locus">STK_14410</name>
</gene>